<accession>A8FMC8</accession>
<evidence type="ECO:0000250" key="1">
    <source>
        <dbReference type="UniProtKB" id="P96503"/>
    </source>
</evidence>
<evidence type="ECO:0000255" key="2">
    <source>
        <dbReference type="HAMAP-Rule" id="MF_01185"/>
    </source>
</evidence>
<evidence type="ECO:0000269" key="3">
    <source>
    </source>
</evidence>
<organism>
    <name type="scientific">Campylobacter jejuni subsp. jejuni serotype O:6 (strain 81116 / NCTC 11828)</name>
    <dbReference type="NCBI Taxonomy" id="407148"/>
    <lineage>
        <taxon>Bacteria</taxon>
        <taxon>Pseudomonadati</taxon>
        <taxon>Campylobacterota</taxon>
        <taxon>Epsilonproteobacteria</taxon>
        <taxon>Campylobacterales</taxon>
        <taxon>Campylobacteraceae</taxon>
        <taxon>Campylobacter</taxon>
    </lineage>
</organism>
<protein>
    <recommendedName>
        <fullName evidence="2">Flagellar assembly factor FliW</fullName>
    </recommendedName>
</protein>
<gene>
    <name evidence="2" type="primary">fliW</name>
    <name type="ordered locus">C8J_1016</name>
</gene>
<dbReference type="EMBL" id="CP000814">
    <property type="protein sequence ID" value="ABV52615.1"/>
    <property type="molecule type" value="Genomic_DNA"/>
</dbReference>
<dbReference type="RefSeq" id="WP_002852982.1">
    <property type="nucleotide sequence ID" value="NC_009839.1"/>
</dbReference>
<dbReference type="SMR" id="A8FMC8"/>
<dbReference type="KEGG" id="cju:C8J_1016"/>
<dbReference type="HOGENOM" id="CLU_112356_2_0_7"/>
<dbReference type="PHI-base" id="PHI:8389"/>
<dbReference type="GO" id="GO:0005737">
    <property type="term" value="C:cytoplasm"/>
    <property type="evidence" value="ECO:0007669"/>
    <property type="project" value="UniProtKB-SubCell"/>
</dbReference>
<dbReference type="GO" id="GO:0044780">
    <property type="term" value="P:bacterial-type flagellum assembly"/>
    <property type="evidence" value="ECO:0007669"/>
    <property type="project" value="UniProtKB-UniRule"/>
</dbReference>
<dbReference type="GO" id="GO:0006417">
    <property type="term" value="P:regulation of translation"/>
    <property type="evidence" value="ECO:0007669"/>
    <property type="project" value="UniProtKB-KW"/>
</dbReference>
<dbReference type="Gene3D" id="2.30.290.10">
    <property type="entry name" value="BH3618-like"/>
    <property type="match status" value="1"/>
</dbReference>
<dbReference type="HAMAP" id="MF_01185">
    <property type="entry name" value="FliW"/>
    <property type="match status" value="1"/>
</dbReference>
<dbReference type="InterPro" id="IPR003775">
    <property type="entry name" value="Flagellar_assembly_factor_FliW"/>
</dbReference>
<dbReference type="InterPro" id="IPR024046">
    <property type="entry name" value="Flagellar_assmbl_FliW_dom_sf"/>
</dbReference>
<dbReference type="NCBIfam" id="NF009790">
    <property type="entry name" value="PRK13282.1"/>
    <property type="match status" value="1"/>
</dbReference>
<dbReference type="PANTHER" id="PTHR39190">
    <property type="entry name" value="FLAGELLAR ASSEMBLY FACTOR FLIW"/>
    <property type="match status" value="1"/>
</dbReference>
<dbReference type="PANTHER" id="PTHR39190:SF1">
    <property type="entry name" value="FLAGELLAR ASSEMBLY FACTOR FLIW"/>
    <property type="match status" value="1"/>
</dbReference>
<dbReference type="Pfam" id="PF02623">
    <property type="entry name" value="FliW"/>
    <property type="match status" value="1"/>
</dbReference>
<dbReference type="SUPFAM" id="SSF141457">
    <property type="entry name" value="BH3618-like"/>
    <property type="match status" value="1"/>
</dbReference>
<reference key="1">
    <citation type="journal article" date="2007" name="J. Bacteriol.">
        <title>The complete genome sequence of Campylobacter jejuni strain 81116 (NCTC11828).</title>
        <authorList>
            <person name="Pearson B.M."/>
            <person name="Gaskin D.J.H."/>
            <person name="Segers R.P.A.M."/>
            <person name="Wells J.M."/>
            <person name="Nuijten P.J.M."/>
            <person name="van Vliet A.H.M."/>
        </authorList>
    </citation>
    <scope>NUCLEOTIDE SEQUENCE [LARGE SCALE GENOMIC DNA]</scope>
    <source>
        <strain>81116 / NCTC 11828</strain>
    </source>
</reference>
<reference key="2">
    <citation type="journal article" date="2016" name="Mol. Microbiol.">
        <title>Feedback control of Campylobacter jejuni flagellin levels through reciprocal binding of FliW to flagellin and the global regulator CsrA.</title>
        <authorList>
            <person name="Radomska K.A."/>
            <person name="Ordonez S.R."/>
            <person name="Woesten M.M."/>
            <person name="Wagenaar J.A."/>
            <person name="van Putten J.P."/>
        </authorList>
    </citation>
    <scope>FUNCTION</scope>
    <scope>INTERACTION WITH FLAGELLIN</scope>
    <scope>INTERACTION WITH CSRA</scope>
    <scope>SUBUNIT</scope>
    <scope>DISRUPTION PHENOTYPE</scope>
    <source>
        <strain>81116 / NCTC 11828</strain>
    </source>
</reference>
<reference key="3">
    <citation type="journal article" date="2017" name="Front. Microbiol.">
        <title>Importance of Campylobacter jejuni FliS and FliW in flagella biogenesis and flagellin secretion.</title>
        <authorList>
            <person name="Radomska K.A."/>
            <person name="Woesten M.M.S.M."/>
            <person name="Ordonez S.R."/>
            <person name="Wagenaar J.A."/>
            <person name="van Putten J.P.M."/>
        </authorList>
    </citation>
    <scope>INTERACTION WITH FLAA</scope>
    <scope>SUBUNIT</scope>
    <source>
        <strain>81116 / NCTC 11828</strain>
    </source>
</reference>
<keyword id="KW-1005">Bacterial flagellum biogenesis</keyword>
<keyword id="KW-0143">Chaperone</keyword>
<keyword id="KW-0963">Cytoplasm</keyword>
<keyword id="KW-0810">Translation regulation</keyword>
<sequence>MTLAVKCPILGFEETKNMEFSTIDEVFVRLKSLDGKDFSFVLINPYLIRPDYEFDIPTYYQELLSLTPESNMKIFNIVAIAKSIEESTVNFLAPVVINLDNNTMVQVILDTVNYPDFFQADQIANYIKK</sequence>
<comment type="function">
    <text evidence="2">Acts as an anti-CsrA protein, binds CsrA and prevents it from repressing translation of its target genes, one of which is flagellin. Binds to flagellin and participates in the assembly of the flagellum.</text>
</comment>
<comment type="function">
    <text evidence="3">Overexpression leads to increased levels of FlaA and FlaB, but levels of FlaC remain stable (PubMed:27353476). Involved in post-transcriptional regulation of flagellin biosynthesis (PubMed:27353476).</text>
</comment>
<comment type="subunit">
    <text evidence="1 3">Interacts with flagellins FlaA and FlaB but not with FlaC; recognizes glycosylated and non-glycosylated FlaA equally (PubMed:27353476, PubMed:28659885). Interacts with CsrA (PubMed:27353476). May form a 3-way complex of flagellin, FliS and FliW simultaneously in which FliS and FliW do not directly interact (By similarity).</text>
</comment>
<comment type="subcellular location">
    <subcellularLocation>
        <location evidence="2">Cytoplasm</location>
    </subcellularLocation>
</comment>
<comment type="disruption phenotype">
    <text evidence="3">Cells grow faster and are about 55% less motile in a swarming assay, flagellar filaments are severely shortened (PubMed:27353476). Decreased levels of flagellins FlaA and FlaB but not FlaC accumulate; 3-fold more flaA and 4-fold less flaB mRNA accumulate in mid-log phase (PubMed:27353476). In double csrA-fliW deletions, flagellin levels are slightly lower than wild-type (PubMed:27353476).</text>
</comment>
<comment type="similarity">
    <text evidence="2">Belongs to the FliW family.</text>
</comment>
<proteinExistence type="evidence at protein level"/>
<name>FLIW_CAMJ8</name>
<feature type="chain" id="PRO_1000073083" description="Flagellar assembly factor FliW">
    <location>
        <begin position="1"/>
        <end position="129"/>
    </location>
</feature>